<name>NU5C_SACOF</name>
<reference key="1">
    <citation type="journal article" date="2004" name="DNA Res.">
        <title>Complete nucleotide sequence of the sugarcane (Saccharum officinarum) chloroplast genome: a comparative analysis of four monocot chloroplast genomes.</title>
        <authorList>
            <person name="Asano T."/>
            <person name="Tsudzuki T."/>
            <person name="Takahashi S."/>
            <person name="Shimada H."/>
            <person name="Kadowaki K."/>
        </authorList>
    </citation>
    <scope>NUCLEOTIDE SEQUENCE [LARGE SCALE GENOMIC DNA]</scope>
</reference>
<dbReference type="EC" id="7.1.1.-"/>
<dbReference type="EMBL" id="AP006714">
    <property type="protein sequence ID" value="BAD27356.1"/>
    <property type="molecule type" value="Genomic_DNA"/>
</dbReference>
<dbReference type="SMR" id="Q6ENQ0"/>
<dbReference type="GO" id="GO:0009535">
    <property type="term" value="C:chloroplast thylakoid membrane"/>
    <property type="evidence" value="ECO:0007669"/>
    <property type="project" value="UniProtKB-SubCell"/>
</dbReference>
<dbReference type="GO" id="GO:0008137">
    <property type="term" value="F:NADH dehydrogenase (ubiquinone) activity"/>
    <property type="evidence" value="ECO:0007669"/>
    <property type="project" value="InterPro"/>
</dbReference>
<dbReference type="GO" id="GO:0048038">
    <property type="term" value="F:quinone binding"/>
    <property type="evidence" value="ECO:0007669"/>
    <property type="project" value="UniProtKB-KW"/>
</dbReference>
<dbReference type="GO" id="GO:0042773">
    <property type="term" value="P:ATP synthesis coupled electron transport"/>
    <property type="evidence" value="ECO:0007669"/>
    <property type="project" value="InterPro"/>
</dbReference>
<dbReference type="GO" id="GO:0015990">
    <property type="term" value="P:electron transport coupled proton transport"/>
    <property type="evidence" value="ECO:0007669"/>
    <property type="project" value="TreeGrafter"/>
</dbReference>
<dbReference type="Gene3D" id="1.20.5.2700">
    <property type="match status" value="1"/>
</dbReference>
<dbReference type="InterPro" id="IPR002128">
    <property type="entry name" value="NADH_UbQ_OxRdtase_chlpt_su5_C"/>
</dbReference>
<dbReference type="InterPro" id="IPR018393">
    <property type="entry name" value="NADHpl_OxRdtase_5_subgr"/>
</dbReference>
<dbReference type="InterPro" id="IPR001750">
    <property type="entry name" value="ND/Mrp_TM"/>
</dbReference>
<dbReference type="InterPro" id="IPR003945">
    <property type="entry name" value="NU5C-like"/>
</dbReference>
<dbReference type="InterPro" id="IPR001516">
    <property type="entry name" value="Proton_antipo_N"/>
</dbReference>
<dbReference type="NCBIfam" id="TIGR01974">
    <property type="entry name" value="NDH_I_L"/>
    <property type="match status" value="1"/>
</dbReference>
<dbReference type="NCBIfam" id="NF005141">
    <property type="entry name" value="PRK06590.1"/>
    <property type="match status" value="1"/>
</dbReference>
<dbReference type="PANTHER" id="PTHR42829">
    <property type="entry name" value="NADH-UBIQUINONE OXIDOREDUCTASE CHAIN 5"/>
    <property type="match status" value="1"/>
</dbReference>
<dbReference type="PANTHER" id="PTHR42829:SF2">
    <property type="entry name" value="NADH-UBIQUINONE OXIDOREDUCTASE CHAIN 5"/>
    <property type="match status" value="1"/>
</dbReference>
<dbReference type="Pfam" id="PF01010">
    <property type="entry name" value="Proton_antipo_C"/>
    <property type="match status" value="1"/>
</dbReference>
<dbReference type="Pfam" id="PF00361">
    <property type="entry name" value="Proton_antipo_M"/>
    <property type="match status" value="1"/>
</dbReference>
<dbReference type="Pfam" id="PF00662">
    <property type="entry name" value="Proton_antipo_N"/>
    <property type="match status" value="1"/>
</dbReference>
<dbReference type="PRINTS" id="PR01434">
    <property type="entry name" value="NADHDHGNASE5"/>
</dbReference>
<dbReference type="PRINTS" id="PR01435">
    <property type="entry name" value="NPOXDRDTASE5"/>
</dbReference>
<gene>
    <name type="primary">ndhF</name>
</gene>
<keyword id="KW-0150">Chloroplast</keyword>
<keyword id="KW-0472">Membrane</keyword>
<keyword id="KW-0520">NAD</keyword>
<keyword id="KW-0521">NADP</keyword>
<keyword id="KW-0934">Plastid</keyword>
<keyword id="KW-0618">Plastoquinone</keyword>
<keyword id="KW-0874">Quinone</keyword>
<keyword id="KW-0691">RNA editing</keyword>
<keyword id="KW-0793">Thylakoid</keyword>
<keyword id="KW-1278">Translocase</keyword>
<keyword id="KW-0812">Transmembrane</keyword>
<keyword id="KW-1133">Transmembrane helix</keyword>
<keyword id="KW-0813">Transport</keyword>
<accession>Q6ENQ0</accession>
<geneLocation type="chloroplast"/>
<evidence type="ECO:0000250" key="1"/>
<evidence type="ECO:0000255" key="2"/>
<evidence type="ECO:0000305" key="3"/>
<organism>
    <name type="scientific">Saccharum officinarum</name>
    <name type="common">Sugarcane</name>
    <dbReference type="NCBI Taxonomy" id="4547"/>
    <lineage>
        <taxon>Eukaryota</taxon>
        <taxon>Viridiplantae</taxon>
        <taxon>Streptophyta</taxon>
        <taxon>Embryophyta</taxon>
        <taxon>Tracheophyta</taxon>
        <taxon>Spermatophyta</taxon>
        <taxon>Magnoliopsida</taxon>
        <taxon>Liliopsida</taxon>
        <taxon>Poales</taxon>
        <taxon>Poaceae</taxon>
        <taxon>PACMAD clade</taxon>
        <taxon>Panicoideae</taxon>
        <taxon>Andropogonodae</taxon>
        <taxon>Andropogoneae</taxon>
        <taxon>Saccharinae</taxon>
        <taxon>Saccharum</taxon>
        <taxon>Saccharum officinarum species complex</taxon>
    </lineage>
</organism>
<comment type="function">
    <text evidence="1">NDH shuttles electrons from NAD(P)H:plastoquinone, via FMN and iron-sulfur (Fe-S) centers, to quinones in the photosynthetic chain and possibly in a chloroplast respiratory chain. The immediate electron acceptor for the enzyme in this species is believed to be plastoquinone. Couples the redox reaction to proton translocation, and thus conserves the redox energy in a proton gradient (By similarity).</text>
</comment>
<comment type="catalytic activity">
    <reaction>
        <text>a plastoquinone + NADH + (n+1) H(+)(in) = a plastoquinol + NAD(+) + n H(+)(out)</text>
        <dbReference type="Rhea" id="RHEA:42608"/>
        <dbReference type="Rhea" id="RHEA-COMP:9561"/>
        <dbReference type="Rhea" id="RHEA-COMP:9562"/>
        <dbReference type="ChEBI" id="CHEBI:15378"/>
        <dbReference type="ChEBI" id="CHEBI:17757"/>
        <dbReference type="ChEBI" id="CHEBI:57540"/>
        <dbReference type="ChEBI" id="CHEBI:57945"/>
        <dbReference type="ChEBI" id="CHEBI:62192"/>
    </reaction>
</comment>
<comment type="catalytic activity">
    <reaction>
        <text>a plastoquinone + NADPH + (n+1) H(+)(in) = a plastoquinol + NADP(+) + n H(+)(out)</text>
        <dbReference type="Rhea" id="RHEA:42612"/>
        <dbReference type="Rhea" id="RHEA-COMP:9561"/>
        <dbReference type="Rhea" id="RHEA-COMP:9562"/>
        <dbReference type="ChEBI" id="CHEBI:15378"/>
        <dbReference type="ChEBI" id="CHEBI:17757"/>
        <dbReference type="ChEBI" id="CHEBI:57783"/>
        <dbReference type="ChEBI" id="CHEBI:58349"/>
        <dbReference type="ChEBI" id="CHEBI:62192"/>
    </reaction>
</comment>
<comment type="subunit">
    <text evidence="1">NDH is composed of at least 16 different subunits, 5 of which are encoded in the nucleus.</text>
</comment>
<comment type="subcellular location">
    <subcellularLocation>
        <location evidence="1">Plastid</location>
        <location evidence="1">Chloroplast thylakoid membrane</location>
        <topology evidence="1">Multi-pass membrane protein</topology>
    </subcellularLocation>
</comment>
<comment type="similarity">
    <text evidence="3">Belongs to the complex I subunit 5 family.</text>
</comment>
<feature type="chain" id="PRO_0000226944" description="NAD(P)H-quinone oxidoreductase subunit 5, chloroplastic">
    <location>
        <begin position="1"/>
        <end position="738"/>
    </location>
</feature>
<feature type="transmembrane region" description="Helical" evidence="2">
    <location>
        <begin position="9"/>
        <end position="29"/>
    </location>
</feature>
<feature type="transmembrane region" description="Helical" evidence="2">
    <location>
        <begin position="39"/>
        <end position="59"/>
    </location>
</feature>
<feature type="transmembrane region" description="Helical" evidence="2">
    <location>
        <begin position="89"/>
        <end position="109"/>
    </location>
</feature>
<feature type="transmembrane region" description="Helical" evidence="2">
    <location>
        <begin position="125"/>
        <end position="145"/>
    </location>
</feature>
<feature type="transmembrane region" description="Helical" evidence="2">
    <location>
        <begin position="147"/>
        <end position="167"/>
    </location>
</feature>
<feature type="transmembrane region" description="Helical" evidence="2">
    <location>
        <begin position="185"/>
        <end position="205"/>
    </location>
</feature>
<feature type="transmembrane region" description="Helical" evidence="2">
    <location>
        <begin position="219"/>
        <end position="239"/>
    </location>
</feature>
<feature type="transmembrane region" description="Helical" evidence="2">
    <location>
        <begin position="258"/>
        <end position="278"/>
    </location>
</feature>
<feature type="transmembrane region" description="Helical" evidence="2">
    <location>
        <begin position="280"/>
        <end position="300"/>
    </location>
</feature>
<feature type="transmembrane region" description="Helical" evidence="2">
    <location>
        <begin position="327"/>
        <end position="347"/>
    </location>
</feature>
<feature type="transmembrane region" description="Helical" evidence="2">
    <location>
        <begin position="354"/>
        <end position="374"/>
    </location>
</feature>
<feature type="transmembrane region" description="Helical" evidence="2">
    <location>
        <begin position="396"/>
        <end position="416"/>
    </location>
</feature>
<feature type="transmembrane region" description="Helical" evidence="2">
    <location>
        <begin position="425"/>
        <end position="445"/>
    </location>
</feature>
<feature type="transmembrane region" description="Helical" evidence="2">
    <location>
        <begin position="542"/>
        <end position="562"/>
    </location>
</feature>
<feature type="transmembrane region" description="Helical" evidence="2">
    <location>
        <begin position="610"/>
        <end position="630"/>
    </location>
</feature>
<feature type="transmembrane region" description="Helical" evidence="2">
    <location>
        <begin position="691"/>
        <end position="711"/>
    </location>
</feature>
<feature type="transmembrane region" description="Helical" evidence="2">
    <location>
        <begin position="717"/>
        <end position="737"/>
    </location>
</feature>
<sequence length="738" mass="82903">MEHTYQYAWVIPLLPLPVIMSMGFGLFLIPTATKNLRRIWAFPSILLLSIAMVFSLHLSIQQINGSSIYQYLWSWTINNDFSLEFGYLVDPLTSIMLILITTVGILVLIYSDDYMSHDEGYLRFFVYISFFNTSMLGLVTSSNLIQIYFFWELVGMCSYLLIGFWFTRPIAASACQKAFVTNRVGDFGLLLGILGFFWITGSLEFRDLFKIANNWIPNNGINSLLTTLCAFLLFLGAVAKSAQFPLHVWLPDAMEGPTPISALIHAATMVAAGIFLLARLLPLFISLPLLMSFISLVGTITLFLGATLALAQRDIKRSLAYSTMSQLGYMMLALGIGSYQAALFHLITHAYSKALLFLGSGSVIHSMEPLVGYSPDKSQNMVLMGGLRKYVPITRTTFLCGTLSLCGIPPLACFWSKDEILSNSWLYSPFFGIIASFTAGLTAFYMFRIYLLTFDGYLRVHFQNYSSTKEGSLYSISLWGKSISKGVNRDFVLSTMKSGVSFFSQNIPKIPANTRNKIGSFSTPFGAKKTFVYPHETGNTMLFPLLILLLFTLFIGSIGIPFDNGVKDNRILELTILSKWLTPSINLFQENSNSSINSYEFLTNAISSVSLAIFGLFIAYIFYGSAYSFFQNLNFQNSLVKKNPKKSFLDEVKKKIYSWSYNRGYIDFFYTRVFILGIRRLAELTHFFDKGVIDGIINGVGLAGFCIGEEIKYVGGGRISSYLFFFLCYVSLFLFFIP</sequence>
<protein>
    <recommendedName>
        <fullName>NAD(P)H-quinone oxidoreductase subunit 5, chloroplastic</fullName>
        <ecNumber>7.1.1.-</ecNumber>
    </recommendedName>
    <alternativeName>
        <fullName>NAD(P)H dehydrogenase subunit 5</fullName>
    </alternativeName>
    <alternativeName>
        <fullName>NADH-plastoquinone oxidoreductase subunit 5</fullName>
    </alternativeName>
</protein>
<proteinExistence type="inferred from homology"/>